<comment type="function">
    <text evidence="1">Has antimicrobial activity against E.coli, E.faecalis, P.aeruginosa, and S.aureus.</text>
</comment>
<comment type="subcellular location">
    <subcellularLocation>
        <location evidence="3">Secreted</location>
    </subcellularLocation>
</comment>
<comment type="tissue specificity">
    <text evidence="3">Expressed by the venom gland.</text>
</comment>
<comment type="mass spectrometry" mass="3769.75" error="0.5" method="Electrospray" evidence="1"/>
<comment type="similarity">
    <text evidence="3">Belongs to the cationic peptide 04 (cupiennin) family. 01 subfamily.</text>
</comment>
<feature type="peptide" id="PRO_0000045040" description="Cupiennin-1c">
    <location>
        <begin position="1"/>
        <end position="35"/>
    </location>
</feature>
<feature type="modified residue" description="Glutamic acid 1-amide" evidence="1">
    <location>
        <position position="35"/>
    </location>
</feature>
<sequence length="35" mass="3771">GFGSLFKFLAKKVAKTVAKQAAKQGAKYIANKQTE</sequence>
<protein>
    <recommendedName>
        <fullName evidence="2">Cupiennin-1c</fullName>
        <shortName evidence="3">Cu-1c</shortName>
    </recommendedName>
    <alternativeName>
        <fullName>M-ctenitoxin-Cs1c</fullName>
        <shortName>M-CNTX-Cs1c</shortName>
    </alternativeName>
</protein>
<proteinExistence type="evidence at protein level"/>
<evidence type="ECO:0000269" key="1">
    <source>
    </source>
</evidence>
<evidence type="ECO:0000303" key="2">
    <source>
    </source>
</evidence>
<evidence type="ECO:0000305" key="3"/>
<organism>
    <name type="scientific">Cupiennius salei</name>
    <name type="common">American wandering spider</name>
    <dbReference type="NCBI Taxonomy" id="6928"/>
    <lineage>
        <taxon>Eukaryota</taxon>
        <taxon>Metazoa</taxon>
        <taxon>Ecdysozoa</taxon>
        <taxon>Arthropoda</taxon>
        <taxon>Chelicerata</taxon>
        <taxon>Arachnida</taxon>
        <taxon>Araneae</taxon>
        <taxon>Araneomorphae</taxon>
        <taxon>Entelegynae</taxon>
        <taxon>Lycosoidea</taxon>
        <taxon>Ctenidae</taxon>
        <taxon>Cupiennius</taxon>
    </lineage>
</organism>
<dbReference type="SMR" id="P83621"/>
<dbReference type="ArachnoServer" id="AS000291">
    <property type="toxin name" value="M-ctenitoxin-Cs1c"/>
</dbReference>
<dbReference type="GO" id="GO:0005576">
    <property type="term" value="C:extracellular region"/>
    <property type="evidence" value="ECO:0007669"/>
    <property type="project" value="UniProtKB-SubCell"/>
</dbReference>
<dbReference type="GO" id="GO:0090729">
    <property type="term" value="F:toxin activity"/>
    <property type="evidence" value="ECO:0007669"/>
    <property type="project" value="UniProtKB-KW"/>
</dbReference>
<dbReference type="GO" id="GO:0042742">
    <property type="term" value="P:defense response to bacterium"/>
    <property type="evidence" value="ECO:0007669"/>
    <property type="project" value="UniProtKB-KW"/>
</dbReference>
<dbReference type="GO" id="GO:0031640">
    <property type="term" value="P:killing of cells of another organism"/>
    <property type="evidence" value="ECO:0007669"/>
    <property type="project" value="UniProtKB-KW"/>
</dbReference>
<dbReference type="InterPro" id="IPR035164">
    <property type="entry name" value="Cupiennin"/>
</dbReference>
<dbReference type="Pfam" id="PF17563">
    <property type="entry name" value="Cu"/>
    <property type="match status" value="1"/>
</dbReference>
<accession>P83621</accession>
<name>TXC1C_CUPSA</name>
<keyword id="KW-0027">Amidation</keyword>
<keyword id="KW-0044">Antibiotic</keyword>
<keyword id="KW-0929">Antimicrobial</keyword>
<keyword id="KW-0204">Cytolysis</keyword>
<keyword id="KW-0903">Direct protein sequencing</keyword>
<keyword id="KW-0354">Hemolysis</keyword>
<keyword id="KW-0528">Neurotoxin</keyword>
<keyword id="KW-0964">Secreted</keyword>
<keyword id="KW-0800">Toxin</keyword>
<reference key="1">
    <citation type="journal article" date="2002" name="J. Biol. Chem.">
        <title>Cupiennin 1, a new family of highly basic antimicrobial peptides in the venom of the spider Cupiennius salei (Ctenidae).</title>
        <authorList>
            <person name="Kuhn-Nentwig L."/>
            <person name="Mueller J."/>
            <person name="Schaller J."/>
            <person name="Walz A."/>
            <person name="Dathe M."/>
            <person name="Nentwig W."/>
        </authorList>
    </citation>
    <scope>PROTEIN SEQUENCE</scope>
    <scope>FUNCTION</scope>
    <scope>MASS SPECTROMETRY</scope>
    <scope>AMIDATION AT GLU-35</scope>
    <source>
        <tissue>Venom</tissue>
    </source>
</reference>